<accession>O94289</accession>
<comment type="function">
    <text evidence="3">Acts as a negative regulator of vacuole-dependent ubiquitin degradation.</text>
</comment>
<comment type="subunit">
    <text evidence="3">Interacts with cdc48.</text>
</comment>
<comment type="subcellular location">
    <subcellularLocation>
        <location evidence="3">Nucleus</location>
    </subcellularLocation>
    <subcellularLocation>
        <location evidence="3">Cytoplasm</location>
    </subcellularLocation>
</comment>
<name>LUB1_SCHPO</name>
<reference key="1">
    <citation type="journal article" date="2002" name="Nature">
        <title>The genome sequence of Schizosaccharomyces pombe.</title>
        <authorList>
            <person name="Wood V."/>
            <person name="Gwilliam R."/>
            <person name="Rajandream M.A."/>
            <person name="Lyne M.H."/>
            <person name="Lyne R."/>
            <person name="Stewart A."/>
            <person name="Sgouros J.G."/>
            <person name="Peat N."/>
            <person name="Hayles J."/>
            <person name="Baker S.G."/>
            <person name="Basham D."/>
            <person name="Bowman S."/>
            <person name="Brooks K."/>
            <person name="Brown D."/>
            <person name="Brown S."/>
            <person name="Chillingworth T."/>
            <person name="Churcher C.M."/>
            <person name="Collins M."/>
            <person name="Connor R."/>
            <person name="Cronin A."/>
            <person name="Davis P."/>
            <person name="Feltwell T."/>
            <person name="Fraser A."/>
            <person name="Gentles S."/>
            <person name="Goble A."/>
            <person name="Hamlin N."/>
            <person name="Harris D.E."/>
            <person name="Hidalgo J."/>
            <person name="Hodgson G."/>
            <person name="Holroyd S."/>
            <person name="Hornsby T."/>
            <person name="Howarth S."/>
            <person name="Huckle E.J."/>
            <person name="Hunt S."/>
            <person name="Jagels K."/>
            <person name="James K.D."/>
            <person name="Jones L."/>
            <person name="Jones M."/>
            <person name="Leather S."/>
            <person name="McDonald S."/>
            <person name="McLean J."/>
            <person name="Mooney P."/>
            <person name="Moule S."/>
            <person name="Mungall K.L."/>
            <person name="Murphy L.D."/>
            <person name="Niblett D."/>
            <person name="Odell C."/>
            <person name="Oliver K."/>
            <person name="O'Neil S."/>
            <person name="Pearson D."/>
            <person name="Quail M.A."/>
            <person name="Rabbinowitsch E."/>
            <person name="Rutherford K.M."/>
            <person name="Rutter S."/>
            <person name="Saunders D."/>
            <person name="Seeger K."/>
            <person name="Sharp S."/>
            <person name="Skelton J."/>
            <person name="Simmonds M.N."/>
            <person name="Squares R."/>
            <person name="Squares S."/>
            <person name="Stevens K."/>
            <person name="Taylor K."/>
            <person name="Taylor R.G."/>
            <person name="Tivey A."/>
            <person name="Walsh S.V."/>
            <person name="Warren T."/>
            <person name="Whitehead S."/>
            <person name="Woodward J.R."/>
            <person name="Volckaert G."/>
            <person name="Aert R."/>
            <person name="Robben J."/>
            <person name="Grymonprez B."/>
            <person name="Weltjens I."/>
            <person name="Vanstreels E."/>
            <person name="Rieger M."/>
            <person name="Schaefer M."/>
            <person name="Mueller-Auer S."/>
            <person name="Gabel C."/>
            <person name="Fuchs M."/>
            <person name="Duesterhoeft A."/>
            <person name="Fritzc C."/>
            <person name="Holzer E."/>
            <person name="Moestl D."/>
            <person name="Hilbert H."/>
            <person name="Borzym K."/>
            <person name="Langer I."/>
            <person name="Beck A."/>
            <person name="Lehrach H."/>
            <person name="Reinhardt R."/>
            <person name="Pohl T.M."/>
            <person name="Eger P."/>
            <person name="Zimmermann W."/>
            <person name="Wedler H."/>
            <person name="Wambutt R."/>
            <person name="Purnelle B."/>
            <person name="Goffeau A."/>
            <person name="Cadieu E."/>
            <person name="Dreano S."/>
            <person name="Gloux S."/>
            <person name="Lelaure V."/>
            <person name="Mottier S."/>
            <person name="Galibert F."/>
            <person name="Aves S.J."/>
            <person name="Xiang Z."/>
            <person name="Hunt C."/>
            <person name="Moore K."/>
            <person name="Hurst S.M."/>
            <person name="Lucas M."/>
            <person name="Rochet M."/>
            <person name="Gaillardin C."/>
            <person name="Tallada V.A."/>
            <person name="Garzon A."/>
            <person name="Thode G."/>
            <person name="Daga R.R."/>
            <person name="Cruzado L."/>
            <person name="Jimenez J."/>
            <person name="Sanchez M."/>
            <person name="del Rey F."/>
            <person name="Benito J."/>
            <person name="Dominguez A."/>
            <person name="Revuelta J.L."/>
            <person name="Moreno S."/>
            <person name="Armstrong J."/>
            <person name="Forsburg S.L."/>
            <person name="Cerutti L."/>
            <person name="Lowe T."/>
            <person name="McCombie W.R."/>
            <person name="Paulsen I."/>
            <person name="Potashkin J."/>
            <person name="Shpakovski G.V."/>
            <person name="Ussery D."/>
            <person name="Barrell B.G."/>
            <person name="Nurse P."/>
        </authorList>
    </citation>
    <scope>NUCLEOTIDE SEQUENCE [LARGE SCALE GENOMIC DNA]</scope>
    <source>
        <strain>972 / ATCC 24843</strain>
    </source>
</reference>
<reference key="2">
    <citation type="journal article" date="2011" name="Science">
        <title>Comparative functional genomics of the fission yeasts.</title>
        <authorList>
            <person name="Rhind N."/>
            <person name="Chen Z."/>
            <person name="Yassour M."/>
            <person name="Thompson D.A."/>
            <person name="Haas B.J."/>
            <person name="Habib N."/>
            <person name="Wapinski I."/>
            <person name="Roy S."/>
            <person name="Lin M.F."/>
            <person name="Heiman D.I."/>
            <person name="Young S.K."/>
            <person name="Furuya K."/>
            <person name="Guo Y."/>
            <person name="Pidoux A."/>
            <person name="Chen H.M."/>
            <person name="Robbertse B."/>
            <person name="Goldberg J.M."/>
            <person name="Aoki K."/>
            <person name="Bayne E.H."/>
            <person name="Berlin A.M."/>
            <person name="Desjardins C.A."/>
            <person name="Dobbs E."/>
            <person name="Dukaj L."/>
            <person name="Fan L."/>
            <person name="FitzGerald M.G."/>
            <person name="French C."/>
            <person name="Gujja S."/>
            <person name="Hansen K."/>
            <person name="Keifenheim D."/>
            <person name="Levin J.Z."/>
            <person name="Mosher R.A."/>
            <person name="Mueller C.A."/>
            <person name="Pfiffner J."/>
            <person name="Priest M."/>
            <person name="Russ C."/>
            <person name="Smialowska A."/>
            <person name="Swoboda P."/>
            <person name="Sykes S.M."/>
            <person name="Vaughn M."/>
            <person name="Vengrova S."/>
            <person name="Yoder R."/>
            <person name="Zeng Q."/>
            <person name="Allshire R."/>
            <person name="Baulcombe D."/>
            <person name="Birren B.W."/>
            <person name="Brown W."/>
            <person name="Ekwall K."/>
            <person name="Kellis M."/>
            <person name="Leatherwood J."/>
            <person name="Levin H."/>
            <person name="Margalit H."/>
            <person name="Martienssen R."/>
            <person name="Nieduszynski C.A."/>
            <person name="Spatafora J.W."/>
            <person name="Friedman N."/>
            <person name="Dalgaard J.Z."/>
            <person name="Baumann P."/>
            <person name="Niki H."/>
            <person name="Regev A."/>
            <person name="Nusbaum C."/>
        </authorList>
    </citation>
    <scope>REVISION OF GENE MODEL</scope>
</reference>
<reference key="3">
    <citation type="journal article" date="2004" name="Mol. Cell. Biol.">
        <title>Lub1 participates in ubiquitin homeostasis and stress response via maintenance of cellular ubiquitin contents in fission yeast.</title>
        <authorList>
            <person name="Ogiso Y."/>
            <person name="Sugiura R."/>
            <person name="Kamo T."/>
            <person name="Yanagiya S."/>
            <person name="Lu Y."/>
            <person name="Okazaki K."/>
            <person name="Shuntoh H."/>
            <person name="Kuno T."/>
        </authorList>
    </citation>
    <scope>FUNCTION</scope>
    <scope>INTERACTION WITH CDC48</scope>
    <scope>SUBCELLULAR LOCATION</scope>
</reference>
<evidence type="ECO:0000255" key="1">
    <source>
        <dbReference type="PROSITE-ProRule" id="PRU00727"/>
    </source>
</evidence>
<evidence type="ECO:0000255" key="2">
    <source>
        <dbReference type="PROSITE-ProRule" id="PRU00729"/>
    </source>
</evidence>
<evidence type="ECO:0000269" key="3">
    <source>
    </source>
</evidence>
<dbReference type="EMBL" id="CU329671">
    <property type="protein sequence ID" value="CAA21889.2"/>
    <property type="molecule type" value="Genomic_DNA"/>
</dbReference>
<dbReference type="PIR" id="T40729">
    <property type="entry name" value="T40729"/>
</dbReference>
<dbReference type="RefSeq" id="NP_596478.2">
    <property type="nucleotide sequence ID" value="NM_001022398.2"/>
</dbReference>
<dbReference type="SMR" id="O94289"/>
<dbReference type="BioGRID" id="277722">
    <property type="interactions" value="175"/>
</dbReference>
<dbReference type="FunCoup" id="O94289">
    <property type="interactions" value="1236"/>
</dbReference>
<dbReference type="STRING" id="284812.O94289"/>
<dbReference type="iPTMnet" id="O94289"/>
<dbReference type="PaxDb" id="4896-SPBC887.04c.1"/>
<dbReference type="EnsemblFungi" id="SPBC887.04c.1">
    <property type="protein sequence ID" value="SPBC887.04c.1:pep"/>
    <property type="gene ID" value="SPBC887.04c"/>
</dbReference>
<dbReference type="GeneID" id="2541208"/>
<dbReference type="KEGG" id="spo:2541208"/>
<dbReference type="PomBase" id="SPBC887.04c">
    <property type="gene designation" value="lub1"/>
</dbReference>
<dbReference type="VEuPathDB" id="FungiDB:SPBC887.04c"/>
<dbReference type="eggNOG" id="KOG0301">
    <property type="taxonomic scope" value="Eukaryota"/>
</dbReference>
<dbReference type="HOGENOM" id="CLU_011791_2_0_1"/>
<dbReference type="InParanoid" id="O94289"/>
<dbReference type="OMA" id="DKCIYYW"/>
<dbReference type="PRO" id="PR:O94289"/>
<dbReference type="Proteomes" id="UP000002485">
    <property type="component" value="Chromosome II"/>
</dbReference>
<dbReference type="GO" id="GO:0005737">
    <property type="term" value="C:cytoplasm"/>
    <property type="evidence" value="ECO:0000314"/>
    <property type="project" value="PomBase"/>
</dbReference>
<dbReference type="GO" id="GO:0005634">
    <property type="term" value="C:nucleus"/>
    <property type="evidence" value="ECO:0000314"/>
    <property type="project" value="PomBase"/>
</dbReference>
<dbReference type="GO" id="GO:0043130">
    <property type="term" value="F:ubiquitin binding"/>
    <property type="evidence" value="ECO:0000318"/>
    <property type="project" value="GO_Central"/>
</dbReference>
<dbReference type="GO" id="GO:0006281">
    <property type="term" value="P:DNA repair"/>
    <property type="evidence" value="ECO:0000250"/>
    <property type="project" value="PomBase"/>
</dbReference>
<dbReference type="GO" id="GO:0043161">
    <property type="term" value="P:proteasome-mediated ubiquitin-dependent protein catabolic process"/>
    <property type="evidence" value="ECO:0000315"/>
    <property type="project" value="PomBase"/>
</dbReference>
<dbReference type="GO" id="GO:0010992">
    <property type="term" value="P:ubiquitin recycling"/>
    <property type="evidence" value="ECO:0000318"/>
    <property type="project" value="GO_Central"/>
</dbReference>
<dbReference type="CDD" id="cd00200">
    <property type="entry name" value="WD40"/>
    <property type="match status" value="1"/>
</dbReference>
<dbReference type="FunFam" id="2.130.10.10:FF:000236">
    <property type="entry name" value="Polyubiquitin binding protein (Doa1/Ufd3)"/>
    <property type="match status" value="1"/>
</dbReference>
<dbReference type="Gene3D" id="1.25.10.10">
    <property type="entry name" value="Leucine-rich Repeat Variant"/>
    <property type="match status" value="1"/>
</dbReference>
<dbReference type="Gene3D" id="3.10.20.870">
    <property type="entry name" value="PFU (PLAA family ubiquitin binding), C-terminal domain"/>
    <property type="match status" value="1"/>
</dbReference>
<dbReference type="Gene3D" id="2.130.10.10">
    <property type="entry name" value="YVTN repeat-like/Quinoprotein amine dehydrogenase"/>
    <property type="match status" value="1"/>
</dbReference>
<dbReference type="InterPro" id="IPR011989">
    <property type="entry name" value="ARM-like"/>
</dbReference>
<dbReference type="InterPro" id="IPR016024">
    <property type="entry name" value="ARM-type_fold"/>
</dbReference>
<dbReference type="InterPro" id="IPR015155">
    <property type="entry name" value="PFU"/>
</dbReference>
<dbReference type="InterPro" id="IPR038122">
    <property type="entry name" value="PFU_sf"/>
</dbReference>
<dbReference type="InterPro" id="IPR013535">
    <property type="entry name" value="PUL_dom"/>
</dbReference>
<dbReference type="InterPro" id="IPR015943">
    <property type="entry name" value="WD40/YVTN_repeat-like_dom_sf"/>
</dbReference>
<dbReference type="InterPro" id="IPR036322">
    <property type="entry name" value="WD40_repeat_dom_sf"/>
</dbReference>
<dbReference type="InterPro" id="IPR001680">
    <property type="entry name" value="WD40_rpt"/>
</dbReference>
<dbReference type="PANTHER" id="PTHR19849">
    <property type="entry name" value="PHOSPHOLIPASE A-2-ACTIVATING PROTEIN"/>
    <property type="match status" value="1"/>
</dbReference>
<dbReference type="PANTHER" id="PTHR19849:SF0">
    <property type="entry name" value="PHOSPHOLIPASE A-2-ACTIVATING PROTEIN"/>
    <property type="match status" value="1"/>
</dbReference>
<dbReference type="Pfam" id="PF09070">
    <property type="entry name" value="PFU"/>
    <property type="match status" value="1"/>
</dbReference>
<dbReference type="Pfam" id="PF08324">
    <property type="entry name" value="PUL"/>
    <property type="match status" value="1"/>
</dbReference>
<dbReference type="Pfam" id="PF00400">
    <property type="entry name" value="WD40"/>
    <property type="match status" value="6"/>
</dbReference>
<dbReference type="SMART" id="SM00320">
    <property type="entry name" value="WD40"/>
    <property type="match status" value="7"/>
</dbReference>
<dbReference type="SUPFAM" id="SSF48371">
    <property type="entry name" value="ARM repeat"/>
    <property type="match status" value="1"/>
</dbReference>
<dbReference type="SUPFAM" id="SSF50978">
    <property type="entry name" value="WD40 repeat-like"/>
    <property type="match status" value="1"/>
</dbReference>
<dbReference type="PROSITE" id="PS51394">
    <property type="entry name" value="PFU"/>
    <property type="match status" value="1"/>
</dbReference>
<dbReference type="PROSITE" id="PS51396">
    <property type="entry name" value="PUL"/>
    <property type="match status" value="1"/>
</dbReference>
<dbReference type="PROSITE" id="PS50082">
    <property type="entry name" value="WD_REPEATS_2"/>
    <property type="match status" value="3"/>
</dbReference>
<dbReference type="PROSITE" id="PS50294">
    <property type="entry name" value="WD_REPEATS_REGION"/>
    <property type="match status" value="1"/>
</dbReference>
<sequence>MTSYELSRELGGHKQDVRGVCSISNELIGSASRDGTYSVWEQINGEWTPHFYENHEGFVNCVCYVPAIDKNSRGYIFSGGQDKCGILQEVGTNSPSYYLFGHESNICSASALNSETIITGSWDSTARVWALGQCKYVLKGHQSSVWAVLALGEDIFITGSADKLIKIWNGEKLVKSILAHNDCVRSLCQIPGGFASCSNDGVIKLWTSDGEFLYELHGHTSFVYSLTYIHNQQLIASCGEDRTIRIWKGKECLQCITLPTTSVWSVSSLPNGDLVCGSSDGFVRIFTVDKVRVAPTEVLKNFEERVSQFAISSQEVGDIKKGSLPGLEILSKPGKADGDVVMVRVNNDVEAYQWSQKENEWKKIGQVVDAVGNNRKQLFEGKEYDYVFDVDVADGQAPLKLPYNATENPYQAANRFLELNQLPLSYTDEVVKFIEKNTQGHSLESKKEPNLESQSSNKIKTTIFPVSQLLFSNANVPAMCQRLRSLNNTKSNPLPAKSIDSLERALSSKKITDTEKNELLETCLSILDSWSLAERFPALDALRLLAINSSSDLAPIFLEVFSRVVKSVPSSGNFESINVMLALRGLSNVVPNITDAEGVSKLMDCLTSTVPQASSAKDFKIAFATLAMNLSILLIQLNLENTGIELLSILFSFLDDPSPDNEAFYRALMALGTLCTVPDIALAASQIYHAQSIVHGIAERFSQEMRFVDAEKQILSLF</sequence>
<feature type="chain" id="PRO_0000051070" description="Ubiquitin homeostasis protein lub1">
    <location>
        <begin position="1"/>
        <end position="718"/>
    </location>
</feature>
<feature type="repeat" description="WD 1">
    <location>
        <begin position="12"/>
        <end position="50"/>
    </location>
</feature>
<feature type="repeat" description="WD 2">
    <location>
        <begin position="54"/>
        <end position="98"/>
    </location>
</feature>
<feature type="repeat" description="WD 3">
    <location>
        <begin position="101"/>
        <end position="139"/>
    </location>
</feature>
<feature type="repeat" description="WD 4">
    <location>
        <begin position="140"/>
        <end position="178"/>
    </location>
</feature>
<feature type="repeat" description="WD 5">
    <location>
        <begin position="180"/>
        <end position="217"/>
    </location>
</feature>
<feature type="repeat" description="WD 6">
    <location>
        <begin position="218"/>
        <end position="257"/>
    </location>
</feature>
<feature type="repeat" description="WD 7">
    <location>
        <begin position="259"/>
        <end position="296"/>
    </location>
</feature>
<feature type="domain" description="PFU" evidence="1">
    <location>
        <begin position="353"/>
        <end position="448"/>
    </location>
</feature>
<feature type="domain" description="PUL" evidence="2">
    <location>
        <begin position="462"/>
        <end position="717"/>
    </location>
</feature>
<proteinExistence type="evidence at protein level"/>
<keyword id="KW-0963">Cytoplasm</keyword>
<keyword id="KW-0539">Nucleus</keyword>
<keyword id="KW-1185">Reference proteome</keyword>
<keyword id="KW-0677">Repeat</keyword>
<keyword id="KW-0833">Ubl conjugation pathway</keyword>
<keyword id="KW-0853">WD repeat</keyword>
<gene>
    <name type="primary">lub1</name>
    <name type="ORF">SPBC887.04c</name>
</gene>
<protein>
    <recommendedName>
        <fullName>Ubiquitin homeostasis protein lub1</fullName>
    </recommendedName>
</protein>
<organism>
    <name type="scientific">Schizosaccharomyces pombe (strain 972 / ATCC 24843)</name>
    <name type="common">Fission yeast</name>
    <dbReference type="NCBI Taxonomy" id="284812"/>
    <lineage>
        <taxon>Eukaryota</taxon>
        <taxon>Fungi</taxon>
        <taxon>Dikarya</taxon>
        <taxon>Ascomycota</taxon>
        <taxon>Taphrinomycotina</taxon>
        <taxon>Schizosaccharomycetes</taxon>
        <taxon>Schizosaccharomycetales</taxon>
        <taxon>Schizosaccharomycetaceae</taxon>
        <taxon>Schizosaccharomyces</taxon>
    </lineage>
</organism>